<comment type="function">
    <text evidence="1">Probable inactive PPIase with no peptidyl-prolyl cis-trans isomerase activity.</text>
</comment>
<comment type="similarity">
    <text evidence="3">Belongs to the cyclophilin-type PPIase family.</text>
</comment>
<comment type="caution">
    <text evidence="1">Despite the fact that it belongs to the cyclophilin-type PPIase family, it has probably no peptidyl-prolyl cis-trans isomerase activity.</text>
</comment>
<reference key="1">
    <citation type="submission" date="2006-04" db="EMBL/GenBank/DDBJ databases">
        <authorList>
            <consortium name="NIH - Mammalian Gene Collection (MGC) project"/>
        </authorList>
    </citation>
    <scope>NUCLEOTIDE SEQUENCE [LARGE SCALE MRNA]</scope>
    <source>
        <strain>Crossbred X Angus</strain>
        <tissue>Liver</tissue>
    </source>
</reference>
<feature type="chain" id="PRO_0000263754" description="Probable inactive peptidyl-prolyl cis-trans isomerase-like 6">
    <location>
        <begin position="1"/>
        <end position="307"/>
    </location>
</feature>
<feature type="domain" description="PPIase cyclophilin-type" evidence="2">
    <location>
        <begin position="141"/>
        <end position="304"/>
    </location>
</feature>
<dbReference type="EMBL" id="BC114789">
    <property type="protein sequence ID" value="AAI14790.1"/>
    <property type="molecule type" value="mRNA"/>
</dbReference>
<dbReference type="RefSeq" id="NP_001040002.1">
    <property type="nucleotide sequence ID" value="NM_001046537.2"/>
</dbReference>
<dbReference type="EMDB" id="EMD-50664"/>
<dbReference type="SMR" id="Q1RMP7"/>
<dbReference type="FunCoup" id="Q1RMP7">
    <property type="interactions" value="194"/>
</dbReference>
<dbReference type="STRING" id="9913.ENSBTAP00000010705"/>
<dbReference type="PaxDb" id="9913-ENSBTAP00000010705"/>
<dbReference type="Ensembl" id="ENSBTAT00000010705.4">
    <property type="protein sequence ID" value="ENSBTAP00000010705.3"/>
    <property type="gene ID" value="ENSBTAG00000008144.4"/>
</dbReference>
<dbReference type="GeneID" id="614498"/>
<dbReference type="KEGG" id="bta:614498"/>
<dbReference type="CTD" id="285755"/>
<dbReference type="VEuPathDB" id="HostDB:ENSBTAG00000008144"/>
<dbReference type="VGNC" id="VGNC:33205">
    <property type="gene designation" value="PPIL6"/>
</dbReference>
<dbReference type="eggNOG" id="KOG0546">
    <property type="taxonomic scope" value="Eukaryota"/>
</dbReference>
<dbReference type="GeneTree" id="ENSGT00940000159634"/>
<dbReference type="HOGENOM" id="CLU_058893_1_0_1"/>
<dbReference type="InParanoid" id="Q1RMP7"/>
<dbReference type="OMA" id="ECKIINC"/>
<dbReference type="OrthoDB" id="408413at2759"/>
<dbReference type="TreeFam" id="TF351326"/>
<dbReference type="Proteomes" id="UP000009136">
    <property type="component" value="Chromosome 9"/>
</dbReference>
<dbReference type="Bgee" id="ENSBTAG00000008144">
    <property type="expression patterns" value="Expressed in semen and 76 other cell types or tissues"/>
</dbReference>
<dbReference type="GO" id="GO:0005737">
    <property type="term" value="C:cytoplasm"/>
    <property type="evidence" value="ECO:0000318"/>
    <property type="project" value="GO_Central"/>
</dbReference>
<dbReference type="GO" id="GO:0003755">
    <property type="term" value="F:peptidyl-prolyl cis-trans isomerase activity"/>
    <property type="evidence" value="ECO:0007669"/>
    <property type="project" value="InterPro"/>
</dbReference>
<dbReference type="FunFam" id="2.40.100.10:FF:000024">
    <property type="entry name" value="Peptidyl-prolyl cis-trans isomerase"/>
    <property type="match status" value="1"/>
</dbReference>
<dbReference type="Gene3D" id="2.40.100.10">
    <property type="entry name" value="Cyclophilin-like"/>
    <property type="match status" value="1"/>
</dbReference>
<dbReference type="InterPro" id="IPR029000">
    <property type="entry name" value="Cyclophilin-like_dom_sf"/>
</dbReference>
<dbReference type="InterPro" id="IPR002130">
    <property type="entry name" value="Cyclophilin-type_PPIase_dom"/>
</dbReference>
<dbReference type="PANTHER" id="PTHR11071">
    <property type="entry name" value="PEPTIDYL-PROLYL CIS-TRANS ISOMERASE"/>
    <property type="match status" value="1"/>
</dbReference>
<dbReference type="PANTHER" id="PTHR11071:SF561">
    <property type="entry name" value="PEPTIDYL-PROLYL CIS-TRANS ISOMERASE D-RELATED"/>
    <property type="match status" value="1"/>
</dbReference>
<dbReference type="Pfam" id="PF00160">
    <property type="entry name" value="Pro_isomerase"/>
    <property type="match status" value="1"/>
</dbReference>
<dbReference type="PRINTS" id="PR00153">
    <property type="entry name" value="CSAPPISMRASE"/>
</dbReference>
<dbReference type="SUPFAM" id="SSF50891">
    <property type="entry name" value="Cyclophilin-like"/>
    <property type="match status" value="1"/>
</dbReference>
<dbReference type="PROSITE" id="PS50072">
    <property type="entry name" value="CSA_PPIASE_2"/>
    <property type="match status" value="1"/>
</dbReference>
<name>PPIL6_BOVIN</name>
<sequence length="307" mass="34679">MASQQHSVPCISRSPPEQPLQVKVVGLFKSSSFQIAKSAAESLKSNYPSNFEDPIIIPVQEFAWHQYLQEKKRELKNEVWEYSSYVMCFINDKLLGDALDLQKWAHKVWDIVDFKPPALYEALTVDYSAKFLRDTKHNFVFLDISIDLYPIGRLIFELYSDTCPKTCKNFQILCTGKAGFSQSGIKLHYTGSIFHRVVRNGWVQGGDIVAGKGDNGESIYGPTFEDENFSVPHNKRGVLGMVNKGRHSNGSQFYITLQAAPYLDKKYVAFGQLIEGTDVLHHLESVPTENERPIQNCVITASGQLYA</sequence>
<organism>
    <name type="scientific">Bos taurus</name>
    <name type="common">Bovine</name>
    <dbReference type="NCBI Taxonomy" id="9913"/>
    <lineage>
        <taxon>Eukaryota</taxon>
        <taxon>Metazoa</taxon>
        <taxon>Chordata</taxon>
        <taxon>Craniata</taxon>
        <taxon>Vertebrata</taxon>
        <taxon>Euteleostomi</taxon>
        <taxon>Mammalia</taxon>
        <taxon>Eutheria</taxon>
        <taxon>Laurasiatheria</taxon>
        <taxon>Artiodactyla</taxon>
        <taxon>Ruminantia</taxon>
        <taxon>Pecora</taxon>
        <taxon>Bovidae</taxon>
        <taxon>Bovinae</taxon>
        <taxon>Bos</taxon>
    </lineage>
</organism>
<evidence type="ECO:0000250" key="1">
    <source>
        <dbReference type="UniProtKB" id="Q8IXY8"/>
    </source>
</evidence>
<evidence type="ECO:0000255" key="2">
    <source>
        <dbReference type="PROSITE-ProRule" id="PRU00156"/>
    </source>
</evidence>
<evidence type="ECO:0000305" key="3"/>
<gene>
    <name evidence="1" type="primary">PPIL6</name>
</gene>
<accession>Q1RMP7</accession>
<keyword id="KW-1185">Reference proteome</keyword>
<protein>
    <recommendedName>
        <fullName evidence="3">Probable inactive peptidyl-prolyl cis-trans isomerase-like 6</fullName>
        <shortName evidence="3">PPIase</shortName>
    </recommendedName>
    <alternativeName>
        <fullName evidence="1">Cyclophilin-like protein PPIL6</fullName>
    </alternativeName>
</protein>
<proteinExistence type="evidence at transcript level"/>